<accession>Q9HWZ3</accession>
<feature type="chain" id="PRO_0000063994" description="Aquaporin Z">
    <location>
        <begin position="1"/>
        <end position="229"/>
    </location>
</feature>
<feature type="transmembrane region" description="Helical" evidence="1">
    <location>
        <begin position="8"/>
        <end position="28"/>
    </location>
</feature>
<feature type="transmembrane region" description="Helical" evidence="1">
    <location>
        <begin position="33"/>
        <end position="53"/>
    </location>
</feature>
<feature type="transmembrane region" description="Helical" evidence="1">
    <location>
        <begin position="81"/>
        <end position="101"/>
    </location>
</feature>
<feature type="transmembrane region" description="Helical" evidence="1">
    <location>
        <begin position="131"/>
        <end position="151"/>
    </location>
</feature>
<feature type="transmembrane region" description="Helical" evidence="1">
    <location>
        <begin position="158"/>
        <end position="178"/>
    </location>
</feature>
<feature type="transmembrane region" description="Helical" evidence="1">
    <location>
        <begin position="199"/>
        <end position="219"/>
    </location>
</feature>
<feature type="short sequence motif" description="NPA 1" evidence="1">
    <location>
        <begin position="62"/>
        <end position="64"/>
    </location>
</feature>
<feature type="short sequence motif" description="NPA 2" evidence="1">
    <location>
        <begin position="184"/>
        <end position="186"/>
    </location>
</feature>
<feature type="site" description="Involved in tetramerization or stability of the tetramer" evidence="1">
    <location>
        <position position="19"/>
    </location>
</feature>
<feature type="site" description="Selectivity filter" evidence="1">
    <location>
        <position position="42"/>
    </location>
</feature>
<feature type="site" description="Selectivity filter" evidence="1">
    <location>
        <position position="172"/>
    </location>
</feature>
<feature type="site" description="Selectivity filter" evidence="1">
    <location>
        <position position="181"/>
    </location>
</feature>
<feature type="site" description="Selectivity filter" evidence="1">
    <location>
        <position position="187"/>
    </location>
</feature>
<dbReference type="EMBL" id="AE004091">
    <property type="protein sequence ID" value="AAG07421.1"/>
    <property type="molecule type" value="Genomic_DNA"/>
</dbReference>
<dbReference type="PIR" id="F83141">
    <property type="entry name" value="F83141"/>
</dbReference>
<dbReference type="RefSeq" id="NP_252723.1">
    <property type="nucleotide sequence ID" value="NC_002516.2"/>
</dbReference>
<dbReference type="RefSeq" id="WP_003102790.1">
    <property type="nucleotide sequence ID" value="NZ_QZGE01000013.1"/>
</dbReference>
<dbReference type="SMR" id="Q9HWZ3"/>
<dbReference type="FunCoup" id="Q9HWZ3">
    <property type="interactions" value="178"/>
</dbReference>
<dbReference type="STRING" id="208964.PA4034"/>
<dbReference type="PaxDb" id="208964-PA4034"/>
<dbReference type="GeneID" id="879049"/>
<dbReference type="KEGG" id="pae:PA4034"/>
<dbReference type="PATRIC" id="fig|208964.12.peg.4225"/>
<dbReference type="PseudoCAP" id="PA4034"/>
<dbReference type="HOGENOM" id="CLU_020019_3_2_6"/>
<dbReference type="InParanoid" id="Q9HWZ3"/>
<dbReference type="OrthoDB" id="9807293at2"/>
<dbReference type="PhylomeDB" id="Q9HWZ3"/>
<dbReference type="BioCyc" id="PAER208964:G1FZ6-4107-MONOMER"/>
<dbReference type="Proteomes" id="UP000002438">
    <property type="component" value="Chromosome"/>
</dbReference>
<dbReference type="GO" id="GO:0005886">
    <property type="term" value="C:plasma membrane"/>
    <property type="evidence" value="ECO:0000318"/>
    <property type="project" value="GO_Central"/>
</dbReference>
<dbReference type="GO" id="GO:0015250">
    <property type="term" value="F:water channel activity"/>
    <property type="evidence" value="ECO:0000318"/>
    <property type="project" value="GO_Central"/>
</dbReference>
<dbReference type="GO" id="GO:0006833">
    <property type="term" value="P:water transport"/>
    <property type="evidence" value="ECO:0000318"/>
    <property type="project" value="GO_Central"/>
</dbReference>
<dbReference type="CDD" id="cd00333">
    <property type="entry name" value="MIP"/>
    <property type="match status" value="1"/>
</dbReference>
<dbReference type="FunFam" id="1.20.1080.10:FF:000007">
    <property type="entry name" value="Aquaporin Z"/>
    <property type="match status" value="1"/>
</dbReference>
<dbReference type="Gene3D" id="1.20.1080.10">
    <property type="entry name" value="Glycerol uptake facilitator protein"/>
    <property type="match status" value="1"/>
</dbReference>
<dbReference type="HAMAP" id="MF_01146">
    <property type="entry name" value="Aquaporin_Z"/>
    <property type="match status" value="1"/>
</dbReference>
<dbReference type="InterPro" id="IPR023271">
    <property type="entry name" value="Aquaporin-like"/>
</dbReference>
<dbReference type="InterPro" id="IPR034294">
    <property type="entry name" value="Aquaporin_transptr"/>
</dbReference>
<dbReference type="InterPro" id="IPR023743">
    <property type="entry name" value="Aquaporin_Z"/>
</dbReference>
<dbReference type="InterPro" id="IPR000425">
    <property type="entry name" value="MIP"/>
</dbReference>
<dbReference type="InterPro" id="IPR022357">
    <property type="entry name" value="MIP_CS"/>
</dbReference>
<dbReference type="NCBIfam" id="TIGR00861">
    <property type="entry name" value="MIP"/>
    <property type="match status" value="1"/>
</dbReference>
<dbReference type="NCBIfam" id="NF003838">
    <property type="entry name" value="PRK05420.1"/>
    <property type="match status" value="1"/>
</dbReference>
<dbReference type="PANTHER" id="PTHR19139">
    <property type="entry name" value="AQUAPORIN TRANSPORTER"/>
    <property type="match status" value="1"/>
</dbReference>
<dbReference type="PANTHER" id="PTHR19139:SF199">
    <property type="entry name" value="MIP17260P"/>
    <property type="match status" value="1"/>
</dbReference>
<dbReference type="Pfam" id="PF00230">
    <property type="entry name" value="MIP"/>
    <property type="match status" value="1"/>
</dbReference>
<dbReference type="PRINTS" id="PR00783">
    <property type="entry name" value="MINTRINSICP"/>
</dbReference>
<dbReference type="SUPFAM" id="SSF81338">
    <property type="entry name" value="Aquaporin-like"/>
    <property type="match status" value="1"/>
</dbReference>
<dbReference type="PROSITE" id="PS00221">
    <property type="entry name" value="MIP"/>
    <property type="match status" value="1"/>
</dbReference>
<gene>
    <name evidence="1" type="primary">aqpZ</name>
    <name type="ordered locus">PA4034</name>
</gene>
<protein>
    <recommendedName>
        <fullName evidence="1">Aquaporin Z</fullName>
    </recommendedName>
</protein>
<evidence type="ECO:0000255" key="1">
    <source>
        <dbReference type="HAMAP-Rule" id="MF_01146"/>
    </source>
</evidence>
<name>AQPZ_PSEAE</name>
<proteinExistence type="inferred from homology"/>
<reference key="1">
    <citation type="journal article" date="2000" name="Nature">
        <title>Complete genome sequence of Pseudomonas aeruginosa PAO1, an opportunistic pathogen.</title>
        <authorList>
            <person name="Stover C.K."/>
            <person name="Pham X.-Q.T."/>
            <person name="Erwin A.L."/>
            <person name="Mizoguchi S.D."/>
            <person name="Warrener P."/>
            <person name="Hickey M.J."/>
            <person name="Brinkman F.S.L."/>
            <person name="Hufnagle W.O."/>
            <person name="Kowalik D.J."/>
            <person name="Lagrou M."/>
            <person name="Garber R.L."/>
            <person name="Goltry L."/>
            <person name="Tolentino E."/>
            <person name="Westbrock-Wadman S."/>
            <person name="Yuan Y."/>
            <person name="Brody L.L."/>
            <person name="Coulter S.N."/>
            <person name="Folger K.R."/>
            <person name="Kas A."/>
            <person name="Larbig K."/>
            <person name="Lim R.M."/>
            <person name="Smith K.A."/>
            <person name="Spencer D.H."/>
            <person name="Wong G.K.-S."/>
            <person name="Wu Z."/>
            <person name="Paulsen I.T."/>
            <person name="Reizer J."/>
            <person name="Saier M.H. Jr."/>
            <person name="Hancock R.E.W."/>
            <person name="Lory S."/>
            <person name="Olson M.V."/>
        </authorList>
    </citation>
    <scope>NUCLEOTIDE SEQUENCE [LARGE SCALE GENOMIC DNA]</scope>
    <source>
        <strain>ATCC 15692 / DSM 22644 / CIP 104116 / JCM 14847 / LMG 12228 / 1C / PRS 101 / PAO1</strain>
    </source>
</reference>
<organism>
    <name type="scientific">Pseudomonas aeruginosa (strain ATCC 15692 / DSM 22644 / CIP 104116 / JCM 14847 / LMG 12228 / 1C / PRS 101 / PAO1)</name>
    <dbReference type="NCBI Taxonomy" id="208964"/>
    <lineage>
        <taxon>Bacteria</taxon>
        <taxon>Pseudomonadati</taxon>
        <taxon>Pseudomonadota</taxon>
        <taxon>Gammaproteobacteria</taxon>
        <taxon>Pseudomonadales</taxon>
        <taxon>Pseudomonadaceae</taxon>
        <taxon>Pseudomonas</taxon>
    </lineage>
</organism>
<comment type="function">
    <text evidence="1">Channel that permits osmotically driven movement of water in both directions. It is involved in the osmoregulation and in the maintenance of cell turgor during volume expansion in rapidly growing cells. It mediates rapid entry or exit of water in response to abrupt changes in osmolarity.</text>
</comment>
<comment type="catalytic activity">
    <reaction evidence="1">
        <text>H2O(in) = H2O(out)</text>
        <dbReference type="Rhea" id="RHEA:29667"/>
        <dbReference type="ChEBI" id="CHEBI:15377"/>
    </reaction>
    <physiologicalReaction direction="left-to-right" evidence="1">
        <dbReference type="Rhea" id="RHEA:29668"/>
    </physiologicalReaction>
    <physiologicalReaction direction="right-to-left" evidence="1">
        <dbReference type="Rhea" id="RHEA:29669"/>
    </physiologicalReaction>
</comment>
<comment type="subunit">
    <text evidence="1">Homotetramer.</text>
</comment>
<comment type="subcellular location">
    <subcellularLocation>
        <location evidence="1">Cell inner membrane</location>
        <topology evidence="1">Multi-pass membrane protein</topology>
    </subcellularLocation>
</comment>
<comment type="domain">
    <text evidence="1">Aquaporins contain two tandem repeats each containing three membrane-spanning domains and a pore-forming loop with the signature motif Asn-Pro-Ala (NPA).</text>
</comment>
<comment type="similarity">
    <text evidence="1">Belongs to the MIP/aquaporin (TC 1.A.8) family.</text>
</comment>
<keyword id="KW-0997">Cell inner membrane</keyword>
<keyword id="KW-1003">Cell membrane</keyword>
<keyword id="KW-0472">Membrane</keyword>
<keyword id="KW-1185">Reference proteome</keyword>
<keyword id="KW-0677">Repeat</keyword>
<keyword id="KW-0812">Transmembrane</keyword>
<keyword id="KW-1133">Transmembrane helix</keyword>
<keyword id="KW-0813">Transport</keyword>
<sequence length="229" mass="23320">MKQYGAEFFGTFWLVLGGCGSAVLAAGVPELGIGYLGVALAFGLSVLTMAYAIGPISGAHLNPAVSVGLWVGGRFPASQLLPYVVAQVLGGLAAGGVLYLIASGKAGFDLAAGFASNGYGEHSPGGYSLQAALVSEVVLTGMFLLIILGATSKRAPQGFAPIAIGLTLTLIHLISIPVTNTSVNPARSTAVALYVGDWAVSQLWLFWVAPILGAVLGALAYRLIGDKND</sequence>